<dbReference type="EMBL" id="CP001144">
    <property type="protein sequence ID" value="ACH77930.1"/>
    <property type="molecule type" value="Genomic_DNA"/>
</dbReference>
<dbReference type="RefSeq" id="WP_001096676.1">
    <property type="nucleotide sequence ID" value="NC_011205.1"/>
</dbReference>
<dbReference type="SMR" id="B5FQJ6"/>
<dbReference type="KEGG" id="sed:SeD_A4556"/>
<dbReference type="HOGENOM" id="CLU_062853_0_0_6"/>
<dbReference type="Proteomes" id="UP000008322">
    <property type="component" value="Chromosome"/>
</dbReference>
<dbReference type="GO" id="GO:0022625">
    <property type="term" value="C:cytosolic large ribosomal subunit"/>
    <property type="evidence" value="ECO:0007669"/>
    <property type="project" value="TreeGrafter"/>
</dbReference>
<dbReference type="GO" id="GO:0019843">
    <property type="term" value="F:rRNA binding"/>
    <property type="evidence" value="ECO:0007669"/>
    <property type="project" value="UniProtKB-UniRule"/>
</dbReference>
<dbReference type="GO" id="GO:0003735">
    <property type="term" value="F:structural constituent of ribosome"/>
    <property type="evidence" value="ECO:0007669"/>
    <property type="project" value="InterPro"/>
</dbReference>
<dbReference type="GO" id="GO:0000049">
    <property type="term" value="F:tRNA binding"/>
    <property type="evidence" value="ECO:0007669"/>
    <property type="project" value="UniProtKB-KW"/>
</dbReference>
<dbReference type="GO" id="GO:0006417">
    <property type="term" value="P:regulation of translation"/>
    <property type="evidence" value="ECO:0007669"/>
    <property type="project" value="UniProtKB-KW"/>
</dbReference>
<dbReference type="GO" id="GO:0006412">
    <property type="term" value="P:translation"/>
    <property type="evidence" value="ECO:0007669"/>
    <property type="project" value="UniProtKB-UniRule"/>
</dbReference>
<dbReference type="CDD" id="cd00403">
    <property type="entry name" value="Ribosomal_L1"/>
    <property type="match status" value="1"/>
</dbReference>
<dbReference type="FunFam" id="3.40.50.790:FF:000001">
    <property type="entry name" value="50S ribosomal protein L1"/>
    <property type="match status" value="1"/>
</dbReference>
<dbReference type="Gene3D" id="3.30.190.20">
    <property type="match status" value="1"/>
</dbReference>
<dbReference type="Gene3D" id="3.40.50.790">
    <property type="match status" value="1"/>
</dbReference>
<dbReference type="HAMAP" id="MF_01318_B">
    <property type="entry name" value="Ribosomal_uL1_B"/>
    <property type="match status" value="1"/>
</dbReference>
<dbReference type="InterPro" id="IPR005878">
    <property type="entry name" value="Ribosom_uL1_bac-type"/>
</dbReference>
<dbReference type="InterPro" id="IPR002143">
    <property type="entry name" value="Ribosomal_uL1"/>
</dbReference>
<dbReference type="InterPro" id="IPR023674">
    <property type="entry name" value="Ribosomal_uL1-like"/>
</dbReference>
<dbReference type="InterPro" id="IPR028364">
    <property type="entry name" value="Ribosomal_uL1/biogenesis"/>
</dbReference>
<dbReference type="InterPro" id="IPR016095">
    <property type="entry name" value="Ribosomal_uL1_3-a/b-sand"/>
</dbReference>
<dbReference type="InterPro" id="IPR023673">
    <property type="entry name" value="Ribosomal_uL1_CS"/>
</dbReference>
<dbReference type="NCBIfam" id="TIGR01169">
    <property type="entry name" value="rplA_bact"/>
    <property type="match status" value="1"/>
</dbReference>
<dbReference type="PANTHER" id="PTHR36427">
    <property type="entry name" value="54S RIBOSOMAL PROTEIN L1, MITOCHONDRIAL"/>
    <property type="match status" value="1"/>
</dbReference>
<dbReference type="PANTHER" id="PTHR36427:SF3">
    <property type="entry name" value="LARGE RIBOSOMAL SUBUNIT PROTEIN UL1M"/>
    <property type="match status" value="1"/>
</dbReference>
<dbReference type="Pfam" id="PF00687">
    <property type="entry name" value="Ribosomal_L1"/>
    <property type="match status" value="1"/>
</dbReference>
<dbReference type="PIRSF" id="PIRSF002155">
    <property type="entry name" value="Ribosomal_L1"/>
    <property type="match status" value="1"/>
</dbReference>
<dbReference type="SUPFAM" id="SSF56808">
    <property type="entry name" value="Ribosomal protein L1"/>
    <property type="match status" value="1"/>
</dbReference>
<dbReference type="PROSITE" id="PS01199">
    <property type="entry name" value="RIBOSOMAL_L1"/>
    <property type="match status" value="1"/>
</dbReference>
<accession>B5FQJ6</accession>
<protein>
    <recommendedName>
        <fullName evidence="1">Large ribosomal subunit protein uL1</fullName>
    </recommendedName>
    <alternativeName>
        <fullName evidence="2">50S ribosomal protein L1</fullName>
    </alternativeName>
</protein>
<comment type="function">
    <text evidence="1">Binds directly to 23S rRNA. The L1 stalk is quite mobile in the ribosome, and is involved in E site tRNA release.</text>
</comment>
<comment type="function">
    <text evidence="1">Protein L1 is also a translational repressor protein, it controls the translation of the L11 operon by binding to its mRNA.</text>
</comment>
<comment type="subunit">
    <text evidence="1">Part of the 50S ribosomal subunit.</text>
</comment>
<comment type="similarity">
    <text evidence="1">Belongs to the universal ribosomal protein uL1 family.</text>
</comment>
<reference key="1">
    <citation type="journal article" date="2011" name="J. Bacteriol.">
        <title>Comparative genomics of 28 Salmonella enterica isolates: evidence for CRISPR-mediated adaptive sublineage evolution.</title>
        <authorList>
            <person name="Fricke W.F."/>
            <person name="Mammel M.K."/>
            <person name="McDermott P.F."/>
            <person name="Tartera C."/>
            <person name="White D.G."/>
            <person name="Leclerc J.E."/>
            <person name="Ravel J."/>
            <person name="Cebula T.A."/>
        </authorList>
    </citation>
    <scope>NUCLEOTIDE SEQUENCE [LARGE SCALE GENOMIC DNA]</scope>
    <source>
        <strain>CT_02021853</strain>
    </source>
</reference>
<keyword id="KW-0678">Repressor</keyword>
<keyword id="KW-0687">Ribonucleoprotein</keyword>
<keyword id="KW-0689">Ribosomal protein</keyword>
<keyword id="KW-0694">RNA-binding</keyword>
<keyword id="KW-0699">rRNA-binding</keyword>
<keyword id="KW-0810">Translation regulation</keyword>
<keyword id="KW-0820">tRNA-binding</keyword>
<proteinExistence type="inferred from homology"/>
<name>RL1_SALDC</name>
<organism>
    <name type="scientific">Salmonella dublin (strain CT_02021853)</name>
    <dbReference type="NCBI Taxonomy" id="439851"/>
    <lineage>
        <taxon>Bacteria</taxon>
        <taxon>Pseudomonadati</taxon>
        <taxon>Pseudomonadota</taxon>
        <taxon>Gammaproteobacteria</taxon>
        <taxon>Enterobacterales</taxon>
        <taxon>Enterobacteriaceae</taxon>
        <taxon>Salmonella</taxon>
    </lineage>
</organism>
<feature type="chain" id="PRO_1000141453" description="Large ribosomal subunit protein uL1">
    <location>
        <begin position="1"/>
        <end position="234"/>
    </location>
</feature>
<gene>
    <name evidence="1" type="primary">rplA</name>
    <name type="ordered locus">SeD_A4556</name>
</gene>
<evidence type="ECO:0000255" key="1">
    <source>
        <dbReference type="HAMAP-Rule" id="MF_01318"/>
    </source>
</evidence>
<evidence type="ECO:0000305" key="2"/>
<sequence>MAKLTKRMRVIREKVDATKQYDINEAIALLKELATAKFNESVDVAVNLGIDARKSDQNVRGATVLPHGTGRSVRVAVFTQGPNAEAAKAAGAELVGMEDLADQIKKGEMNFDVVIASPDAMRVVGQLGQVLGPRGLMPNPKVGTVTPNVAEAVKNAKAGQVRYRNDKNGIIHTTIGKVDFDADKLKENLEALLVALKKAKPSQAKGVYIKKVSISTTMGAGVAVDQAGLSASAN</sequence>